<accession>Q8NYF5</accession>
<sequence>MKKKNWIYALIVTLIIIIAIVSMIFFVQTKYGDQSEKGSRSVSNKNNKIHIAIVNEDQPTTYNGKKVELGQAFIKRLANEKNYKFETVTRNVAESGLKNGGYQVMIVIPENFSKLAMQLDAKTPSKISLQYKTAVGQKEEVAKNTEKVVSNVLNDFNKNLVEIYLTSIIDNLHNAQKNVGAIMTREHGVNSKFSNYLLNPINDFPELFTDTLVNSISANKDITKWFQTYNKSLLSANSDTFRVNTDYNVSTLIEKQNSLFDEHNTAMDKMLQDYKSQKDSVELDNYINALKQMDSQIDQQSSMQDTGKEEYKQTVKENLDKLREIIQSQESPFSKGMIEDYRKQLTESLQDELANNKDLQDALNSIKMNNAQFAENLEKQLHDDIVKEPDTDTTFIYNMSKQDFIAAGLNEDEANKYEAIVKEAKRYKNEYNLKKPLAEHINLTDYDNQVAQDTSSLINDGVKVQRTETIKSNDINQLTVATDPHFNFEGDIKINGKKYDIKDQSVQLDTSNKEYKVEVNGVAKLKKDAEKDFLKDKTMHLQLLFGQANRQDEPNDKKTTSVVDVTLNHNLDGRLSKDALSQQLSALSRFDAHYKMYTDTKGREDKPFDNKRLIDMMVDQVINDMESFKDDKVAVLHQIDSMEENSDKLIDDILNNKKNTTKNKEDISKLIDQLENVKKTFAEEPQEPKIDKGKNDEFNTMSSNLDKEISRISEKSTQLLSDTQESKTIADSVSGQLNQLDNNVNKLHATGRALGVRANDLNRQMAKNDKDNELFAKEFKKVLQNSKDGDRQNQALKAFMSNPVQKKNLENVLANNGNTDVISPTLFVLLMYLLSMITAYIFYSYERAKGQMNFIKDDYSSKNHLWNNVITSGVIGTTGLVEGLIVGLIAMNKFHVLAGYRAKFILMVILTMMVFVLINTYLLRQVKSIGMFLMIAALGLYFVAMNNLKAAGQGVTNKISPLSYIDNMFFNYLNAEHPIGLALVILTVLVIIGFVLNMFIKHFKKERLI</sequence>
<organism>
    <name type="scientific">Staphylococcus aureus (strain MW2)</name>
    <dbReference type="NCBI Taxonomy" id="196620"/>
    <lineage>
        <taxon>Bacteria</taxon>
        <taxon>Bacillati</taxon>
        <taxon>Bacillota</taxon>
        <taxon>Bacilli</taxon>
        <taxon>Bacillales</taxon>
        <taxon>Staphylococcaceae</taxon>
        <taxon>Staphylococcus</taxon>
    </lineage>
</organism>
<keyword id="KW-1003">Cell membrane</keyword>
<keyword id="KW-0472">Membrane</keyword>
<keyword id="KW-0812">Transmembrane</keyword>
<keyword id="KW-1133">Transmembrane helix</keyword>
<keyword id="KW-0843">Virulence</keyword>
<protein>
    <recommendedName>
        <fullName evidence="2">Type VII secretion system accessory factor EsaA</fullName>
    </recommendedName>
</protein>
<name>ESAA_STAAW</name>
<evidence type="ECO:0000250" key="1">
    <source>
        <dbReference type="UniProtKB" id="A0A0H2XFP1"/>
    </source>
</evidence>
<evidence type="ECO:0000250" key="2">
    <source>
        <dbReference type="UniProtKB" id="P0C049"/>
    </source>
</evidence>
<evidence type="ECO:0000250" key="3">
    <source>
        <dbReference type="UniProtKB" id="Q2G188"/>
    </source>
</evidence>
<evidence type="ECO:0000255" key="4"/>
<evidence type="ECO:0000305" key="5"/>
<reference key="1">
    <citation type="journal article" date="2002" name="Lancet">
        <title>Genome and virulence determinants of high virulence community-acquired MRSA.</title>
        <authorList>
            <person name="Baba T."/>
            <person name="Takeuchi F."/>
            <person name="Kuroda M."/>
            <person name="Yuzawa H."/>
            <person name="Aoki K."/>
            <person name="Oguchi A."/>
            <person name="Nagai Y."/>
            <person name="Iwama N."/>
            <person name="Asano K."/>
            <person name="Naimi T."/>
            <person name="Kuroda H."/>
            <person name="Cui L."/>
            <person name="Yamamoto K."/>
            <person name="Hiramatsu K."/>
        </authorList>
    </citation>
    <scope>NUCLEOTIDE SEQUENCE [LARGE SCALE GENOMIC DNA]</scope>
    <source>
        <strain>MW2</strain>
    </source>
</reference>
<proteinExistence type="inferred from homology"/>
<gene>
    <name evidence="2" type="primary">esaA</name>
    <name type="ordered locus">MW0259</name>
</gene>
<dbReference type="EMBL" id="BA000033">
    <property type="protein sequence ID" value="BAB94124.1"/>
    <property type="molecule type" value="Genomic_DNA"/>
</dbReference>
<dbReference type="RefSeq" id="WP_000728972.1">
    <property type="nucleotide sequence ID" value="NC_003923.1"/>
</dbReference>
<dbReference type="SMR" id="Q8NYF5"/>
<dbReference type="KEGG" id="sam:MW0259"/>
<dbReference type="HOGENOM" id="CLU_015018_0_0_9"/>
<dbReference type="GO" id="GO:0005886">
    <property type="term" value="C:plasma membrane"/>
    <property type="evidence" value="ECO:0007669"/>
    <property type="project" value="UniProtKB-SubCell"/>
</dbReference>
<dbReference type="Gene3D" id="3.40.1710.10">
    <property type="entry name" value="abc type-2 transporter like domain"/>
    <property type="match status" value="1"/>
</dbReference>
<dbReference type="InterPro" id="IPR051328">
    <property type="entry name" value="T7SS_ABC-Transporter"/>
</dbReference>
<dbReference type="InterPro" id="IPR023838">
    <property type="entry name" value="T7SS_EsaA"/>
</dbReference>
<dbReference type="NCBIfam" id="TIGR03929">
    <property type="entry name" value="T7_esaA_Nterm"/>
    <property type="match status" value="1"/>
</dbReference>
<dbReference type="PANTHER" id="PTHR43077:SF10">
    <property type="entry name" value="TRANSPORT PERMEASE PROTEIN"/>
    <property type="match status" value="1"/>
</dbReference>
<dbReference type="PANTHER" id="PTHR43077">
    <property type="entry name" value="TRANSPORT PERMEASE YVFS-RELATED"/>
    <property type="match status" value="1"/>
</dbReference>
<comment type="function">
    <text evidence="1">Component of the type VII secretion system (Ess). Provides together with EssB and other components such as EssC and EssE a secretion platform across the cytoplasmic membrane in the host.</text>
</comment>
<comment type="subunit">
    <text evidence="1 3">Homodimer (By similarity). Interacts with EssB (By similarity).</text>
</comment>
<comment type="subcellular location">
    <subcellularLocation>
        <location evidence="3">Cell membrane</location>
        <topology evidence="4">Multi-pass membrane protein</topology>
    </subcellularLocation>
</comment>
<comment type="similarity">
    <text evidence="5">Belongs to the EsaA family.</text>
</comment>
<feature type="chain" id="PRO_0000087042" description="Type VII secretion system accessory factor EsaA">
    <location>
        <begin position="1"/>
        <end position="1009"/>
    </location>
</feature>
<feature type="transmembrane region" description="Helical" evidence="4">
    <location>
        <begin position="7"/>
        <end position="27"/>
    </location>
</feature>
<feature type="transmembrane region" description="Helical" evidence="4">
    <location>
        <begin position="822"/>
        <end position="842"/>
    </location>
</feature>
<feature type="transmembrane region" description="Helical" evidence="4">
    <location>
        <begin position="869"/>
        <end position="889"/>
    </location>
</feature>
<feature type="transmembrane region" description="Helical" evidence="4">
    <location>
        <begin position="903"/>
        <end position="923"/>
    </location>
</feature>
<feature type="transmembrane region" description="Helical" evidence="4">
    <location>
        <begin position="928"/>
        <end position="948"/>
    </location>
</feature>
<feature type="transmembrane region" description="Helical" evidence="4">
    <location>
        <begin position="979"/>
        <end position="999"/>
    </location>
</feature>